<organism>
    <name type="scientific">African swine fever virus (isolate Tick/Malawi/Lil 20-1/1983)</name>
    <name type="common">ASFV</name>
    <dbReference type="NCBI Taxonomy" id="10500"/>
    <lineage>
        <taxon>Viruses</taxon>
        <taxon>Varidnaviria</taxon>
        <taxon>Bamfordvirae</taxon>
        <taxon>Nucleocytoviricota</taxon>
        <taxon>Pokkesviricetes</taxon>
        <taxon>Asfuvirales</taxon>
        <taxon>Asfarviridae</taxon>
        <taxon>Asfivirus</taxon>
        <taxon>African swine fever virus</taxon>
    </lineage>
</organism>
<protein>
    <recommendedName>
        <fullName>Protein MGF 505-9R</fullName>
    </recommendedName>
</protein>
<sequence>MFSLQDLCRKNLFLPLEPLGKHVVQRLGLYWKGHGSLKQMGQCFVCIDQTWILSIHKALQIAASEGNEDIVKLLILWNGNLKYAIIGALEGRHYDLIQKYYNQIGDCHEILPLIQDPKIYERCHELNVTCTFQCLFQHAIKDNMLPILQKYGQDLNGNRRMVQLLYEMACRLQNYDIIKWIGFNLQVYNLEAIFSIAFVRKDLTLYSLGYMLLLNRMSTEDRNFISIITRHLEYASKKGLLDFVLESLKYGGQVDTVLFQAVKYNHRKILAHFIHHVPREIVEKLILHAVESRASRKTFNLLLSSINYCMNPFVKKLLHAVVKHKFMLIIKLLLERPKKKINLVNAALFKLVKYSTYPEIVKYMKEFSVNPEMVIKMAARLMRVDLIKKISKDAWENKLERIKHLKQMVHTMNHRNGKNLIMYNIYDITGYTYLNAKEAFNLTRFYAVHNATCLFKEMCKNCFVHDLIQLRELLEDCLHIANRHAYIQIAETANEYIKYIDDITPK</sequence>
<name>5059R_ASFM2</name>
<accession>P0C9U7</accession>
<feature type="chain" id="PRO_0000373346" description="Protein MGF 505-9R">
    <location>
        <begin position="1"/>
        <end position="506"/>
    </location>
</feature>
<feature type="repeat" description="ANK 1">
    <location>
        <begin position="54"/>
        <end position="83"/>
    </location>
</feature>
<feature type="repeat" description="ANK 2">
    <location>
        <begin position="253"/>
        <end position="283"/>
    </location>
</feature>
<feature type="repeat" description="ANK 3">
    <location>
        <begin position="313"/>
        <end position="343"/>
    </location>
</feature>
<dbReference type="EMBL" id="AY261361">
    <property type="status" value="NOT_ANNOTATED_CDS"/>
    <property type="molecule type" value="Genomic_DNA"/>
</dbReference>
<dbReference type="SMR" id="P0C9U7"/>
<dbReference type="Proteomes" id="UP000000860">
    <property type="component" value="Segment"/>
</dbReference>
<dbReference type="Gene3D" id="1.25.40.20">
    <property type="entry name" value="Ankyrin repeat-containing domain"/>
    <property type="match status" value="1"/>
</dbReference>
<dbReference type="InterPro" id="IPR036770">
    <property type="entry name" value="Ankyrin_rpt-contain_sf"/>
</dbReference>
<dbReference type="InterPro" id="IPR004858">
    <property type="entry name" value="MGF_505"/>
</dbReference>
<dbReference type="Pfam" id="PF03158">
    <property type="entry name" value="DUF249"/>
    <property type="match status" value="1"/>
</dbReference>
<dbReference type="SUPFAM" id="SSF48403">
    <property type="entry name" value="Ankyrin repeat"/>
    <property type="match status" value="1"/>
</dbReference>
<gene>
    <name type="ordered locus">Mal-040</name>
</gene>
<comment type="function">
    <text evidence="1">Plays a role in virus cell tropism, and may be required for efficient virus replication in macrophages.</text>
</comment>
<comment type="induction">
    <text evidence="2">Expressed in the early phase of the viral replicative cycle.</text>
</comment>
<comment type="similarity">
    <text evidence="2">Belongs to the asfivirus MGF 505 family.</text>
</comment>
<organismHost>
    <name type="scientific">Ornithodoros</name>
    <name type="common">relapsing fever ticks</name>
    <dbReference type="NCBI Taxonomy" id="6937"/>
</organismHost>
<organismHost>
    <name type="scientific">Phacochoerus aethiopicus</name>
    <name type="common">Warthog</name>
    <dbReference type="NCBI Taxonomy" id="85517"/>
</organismHost>
<organismHost>
    <name type="scientific">Phacochoerus africanus</name>
    <name type="common">Warthog</name>
    <dbReference type="NCBI Taxonomy" id="41426"/>
</organismHost>
<organismHost>
    <name type="scientific">Potamochoerus larvatus</name>
    <name type="common">Bushpig</name>
    <dbReference type="NCBI Taxonomy" id="273792"/>
</organismHost>
<organismHost>
    <name type="scientific">Sus scrofa</name>
    <name type="common">Pig</name>
    <dbReference type="NCBI Taxonomy" id="9823"/>
</organismHost>
<keyword id="KW-0040">ANK repeat</keyword>
<keyword id="KW-0244">Early protein</keyword>
<keyword id="KW-0677">Repeat</keyword>
<reference key="1">
    <citation type="submission" date="2003-03" db="EMBL/GenBank/DDBJ databases">
        <title>African swine fever virus genomes.</title>
        <authorList>
            <person name="Kutish G.F."/>
            <person name="Rock D.L."/>
        </authorList>
    </citation>
    <scope>NUCLEOTIDE SEQUENCE [LARGE SCALE GENOMIC DNA]</scope>
</reference>
<evidence type="ECO:0000250" key="1">
    <source>
        <dbReference type="UniProtKB" id="Q89740"/>
    </source>
</evidence>
<evidence type="ECO:0000305" key="2"/>
<proteinExistence type="inferred from homology"/>